<reference key="1">
    <citation type="journal article" date="1996" name="EMBO J.">
        <title>Complete nucleotide sequence of Saccharomyces cerevisiae chromosome X.</title>
        <authorList>
            <person name="Galibert F."/>
            <person name="Alexandraki D."/>
            <person name="Baur A."/>
            <person name="Boles E."/>
            <person name="Chalwatzis N."/>
            <person name="Chuat J.-C."/>
            <person name="Coster F."/>
            <person name="Cziepluch C."/>
            <person name="de Haan M."/>
            <person name="Domdey H."/>
            <person name="Durand P."/>
            <person name="Entian K.-D."/>
            <person name="Gatius M."/>
            <person name="Goffeau A."/>
            <person name="Grivell L.A."/>
            <person name="Hennemann A."/>
            <person name="Herbert C.J."/>
            <person name="Heumann K."/>
            <person name="Hilger F."/>
            <person name="Hollenberg C.P."/>
            <person name="Huang M.-E."/>
            <person name="Jacq C."/>
            <person name="Jauniaux J.-C."/>
            <person name="Katsoulou C."/>
            <person name="Kirchrath L."/>
            <person name="Kleine K."/>
            <person name="Kordes E."/>
            <person name="Koetter P."/>
            <person name="Liebl S."/>
            <person name="Louis E.J."/>
            <person name="Manus V."/>
            <person name="Mewes H.-W."/>
            <person name="Miosga T."/>
            <person name="Obermaier B."/>
            <person name="Perea J."/>
            <person name="Pohl T.M."/>
            <person name="Portetelle D."/>
            <person name="Pujol A."/>
            <person name="Purnelle B."/>
            <person name="Ramezani Rad M."/>
            <person name="Rasmussen S.W."/>
            <person name="Rose M."/>
            <person name="Rossau R."/>
            <person name="Schaaff-Gerstenschlaeger I."/>
            <person name="Smits P.H.M."/>
            <person name="Scarcez T."/>
            <person name="Soriano N."/>
            <person name="To Van D."/>
            <person name="Tzermia M."/>
            <person name="Van Broekhoven A."/>
            <person name="Vandenbol M."/>
            <person name="Wedler H."/>
            <person name="von Wettstein D."/>
            <person name="Wambutt R."/>
            <person name="Zagulski M."/>
            <person name="Zollner A."/>
            <person name="Karpfinger-Hartl L."/>
        </authorList>
    </citation>
    <scope>NUCLEOTIDE SEQUENCE [LARGE SCALE GENOMIC DNA]</scope>
    <source>
        <strain>ATCC 204508 / S288c</strain>
    </source>
</reference>
<reference key="2">
    <citation type="journal article" date="2014" name="G3 (Bethesda)">
        <title>The reference genome sequence of Saccharomyces cerevisiae: Then and now.</title>
        <authorList>
            <person name="Engel S.R."/>
            <person name="Dietrich F.S."/>
            <person name="Fisk D.G."/>
            <person name="Binkley G."/>
            <person name="Balakrishnan R."/>
            <person name="Costanzo M.C."/>
            <person name="Dwight S.S."/>
            <person name="Hitz B.C."/>
            <person name="Karra K."/>
            <person name="Nash R.S."/>
            <person name="Weng S."/>
            <person name="Wong E.D."/>
            <person name="Lloyd P."/>
            <person name="Skrzypek M.S."/>
            <person name="Miyasato S.R."/>
            <person name="Simison M."/>
            <person name="Cherry J.M."/>
        </authorList>
    </citation>
    <scope>GENOME REANNOTATION</scope>
    <source>
        <strain>ATCC 204508 / S288c</strain>
    </source>
</reference>
<reference key="3">
    <citation type="journal article" date="2007" name="Genome Res.">
        <title>Approaching a complete repository of sequence-verified protein-encoding clones for Saccharomyces cerevisiae.</title>
        <authorList>
            <person name="Hu Y."/>
            <person name="Rolfs A."/>
            <person name="Bhullar B."/>
            <person name="Murthy T.V.S."/>
            <person name="Zhu C."/>
            <person name="Berger M.F."/>
            <person name="Camargo A.A."/>
            <person name="Kelley F."/>
            <person name="McCarron S."/>
            <person name="Jepson D."/>
            <person name="Richardson A."/>
            <person name="Raphael J."/>
            <person name="Moreira D."/>
            <person name="Taycher E."/>
            <person name="Zuo D."/>
            <person name="Mohr S."/>
            <person name="Kane M.F."/>
            <person name="Williamson J."/>
            <person name="Simpson A.J.G."/>
            <person name="Bulyk M.L."/>
            <person name="Harlow E."/>
            <person name="Marsischky G."/>
            <person name="Kolodner R.D."/>
            <person name="LaBaer J."/>
        </authorList>
    </citation>
    <scope>NUCLEOTIDE SEQUENCE [GENOMIC DNA]</scope>
    <source>
        <strain>ATCC 204508 / S288c</strain>
    </source>
</reference>
<name>YJ90_YEAST</name>
<accession>P47157</accession>
<accession>D6VWT9</accession>
<accession>Q6B2S5</accession>
<keyword id="KW-1185">Reference proteome</keyword>
<keyword id="KW-0732">Signal</keyword>
<sequence length="116" mass="13411">MRWDVIILYAISRPYATRRTGSHTHPRDSRYIAANQRRPPSACRVGPSPAKQRKDIPIFELLDTTLIKNALFALTSFLYYRTNILTCPFLNFLYLSRTGQLDKFCKDQTVTQILAT</sequence>
<gene>
    <name type="ordered locus">YJR120W</name>
    <name type="ORF">J2039</name>
</gene>
<evidence type="ECO:0000255" key="1"/>
<evidence type="ECO:0000256" key="2">
    <source>
        <dbReference type="SAM" id="MobiDB-lite"/>
    </source>
</evidence>
<evidence type="ECO:0000305" key="3"/>
<dbReference type="EMBL" id="Z49620">
    <property type="protein sequence ID" value="CAA89650.1"/>
    <property type="molecule type" value="Genomic_DNA"/>
</dbReference>
<dbReference type="EMBL" id="AY692655">
    <property type="protein sequence ID" value="AAT92674.1"/>
    <property type="molecule type" value="Genomic_DNA"/>
</dbReference>
<dbReference type="EMBL" id="BK006943">
    <property type="protein sequence ID" value="DAA08905.1"/>
    <property type="molecule type" value="Genomic_DNA"/>
</dbReference>
<dbReference type="PIR" id="S57143">
    <property type="entry name" value="S57143"/>
</dbReference>
<dbReference type="SMR" id="P47157"/>
<dbReference type="BioGRID" id="33876">
    <property type="interactions" value="312"/>
</dbReference>
<dbReference type="DIP" id="DIP-4703N"/>
<dbReference type="FunCoup" id="P47157">
    <property type="interactions" value="30"/>
</dbReference>
<dbReference type="IntAct" id="P47157">
    <property type="interactions" value="3"/>
</dbReference>
<dbReference type="STRING" id="4932.YJR120W"/>
<dbReference type="PaxDb" id="4932-YJR120W"/>
<dbReference type="EnsemblFungi" id="YJR120W_mRNA">
    <property type="protein sequence ID" value="YJR120W"/>
    <property type="gene ID" value="YJR120W"/>
</dbReference>
<dbReference type="KEGG" id="sce:YJR120W"/>
<dbReference type="AGR" id="SGD:S000003881"/>
<dbReference type="SGD" id="S000003881">
    <property type="gene designation" value="YJR120W"/>
</dbReference>
<dbReference type="VEuPathDB" id="FungiDB:YJR120W"/>
<dbReference type="HOGENOM" id="CLU_2401365_0_0_1"/>
<dbReference type="InParanoid" id="P47157"/>
<dbReference type="OrthoDB" id="10272945at2759"/>
<dbReference type="BioCyc" id="YEAST:G3O-31741-MONOMER"/>
<dbReference type="BioGRID-ORCS" id="853584">
    <property type="hits" value="2 hits in 10 CRISPR screens"/>
</dbReference>
<dbReference type="ChiTaRS" id="YJR120W">
    <property type="organism name" value="yeast"/>
</dbReference>
<dbReference type="PRO" id="PR:P47157"/>
<dbReference type="Proteomes" id="UP000002311">
    <property type="component" value="Chromosome X"/>
</dbReference>
<dbReference type="RNAct" id="P47157">
    <property type="molecule type" value="protein"/>
</dbReference>
<dbReference type="GO" id="GO:0045333">
    <property type="term" value="P:cellular respiration"/>
    <property type="evidence" value="ECO:0000315"/>
    <property type="project" value="SGD"/>
</dbReference>
<dbReference type="GO" id="GO:0007005">
    <property type="term" value="P:mitochondrion organization"/>
    <property type="evidence" value="ECO:0000315"/>
    <property type="project" value="SGD"/>
</dbReference>
<dbReference type="GO" id="GO:0015918">
    <property type="term" value="P:sterol transport"/>
    <property type="evidence" value="ECO:0000315"/>
    <property type="project" value="SGD"/>
</dbReference>
<proteinExistence type="inferred from homology"/>
<protein>
    <recommendedName>
        <fullName>Putative uncharacterized protein YJR120W</fullName>
    </recommendedName>
</protein>
<feature type="signal peptide" evidence="1">
    <location>
        <begin position="1"/>
        <end position="19"/>
    </location>
</feature>
<feature type="chain" id="PRO_0000014335" description="Putative uncharacterized protein YJR120W">
    <location>
        <begin position="20"/>
        <end position="116"/>
    </location>
</feature>
<feature type="region of interest" description="Disordered" evidence="2">
    <location>
        <begin position="18"/>
        <end position="50"/>
    </location>
</feature>
<feature type="sequence conflict" description="In Ref. 3; AAT92674." evidence="3" ref="3">
    <original>T</original>
    <variation>A</variation>
    <location>
        <position position="111"/>
    </location>
</feature>
<organism>
    <name type="scientific">Saccharomyces cerevisiae (strain ATCC 204508 / S288c)</name>
    <name type="common">Baker's yeast</name>
    <dbReference type="NCBI Taxonomy" id="559292"/>
    <lineage>
        <taxon>Eukaryota</taxon>
        <taxon>Fungi</taxon>
        <taxon>Dikarya</taxon>
        <taxon>Ascomycota</taxon>
        <taxon>Saccharomycotina</taxon>
        <taxon>Saccharomycetes</taxon>
        <taxon>Saccharomycetales</taxon>
        <taxon>Saccharomycetaceae</taxon>
        <taxon>Saccharomyces</taxon>
    </lineage>
</organism>